<reference key="1">
    <citation type="submission" date="2008-05" db="EMBL/GenBank/DDBJ databases">
        <title>Complete sequence of Shigella boydii serotype 18 strain BS512.</title>
        <authorList>
            <person name="Rasko D.A."/>
            <person name="Rosovitz M."/>
            <person name="Maurelli A.T."/>
            <person name="Myers G."/>
            <person name="Seshadri R."/>
            <person name="Cer R."/>
            <person name="Jiang L."/>
            <person name="Ravel J."/>
            <person name="Sebastian Y."/>
        </authorList>
    </citation>
    <scope>NUCLEOTIDE SEQUENCE [LARGE SCALE GENOMIC DNA]</scope>
    <source>
        <strain>CDC 3083-94 / BS512</strain>
    </source>
</reference>
<evidence type="ECO:0000255" key="1">
    <source>
        <dbReference type="HAMAP-Rule" id="MF_01631"/>
    </source>
</evidence>
<protein>
    <recommendedName>
        <fullName evidence="1">Bifunctional protein GlmU</fullName>
    </recommendedName>
    <domain>
        <recommendedName>
            <fullName evidence="1">UDP-N-acetylglucosamine pyrophosphorylase</fullName>
            <ecNumber evidence="1">2.7.7.23</ecNumber>
        </recommendedName>
        <alternativeName>
            <fullName evidence="1">N-acetylglucosamine-1-phosphate uridyltransferase</fullName>
        </alternativeName>
    </domain>
    <domain>
        <recommendedName>
            <fullName evidence="1">Glucosamine-1-phosphate N-acetyltransferase</fullName>
            <ecNumber evidence="1">2.3.1.157</ecNumber>
        </recommendedName>
    </domain>
</protein>
<organism>
    <name type="scientific">Shigella boydii serotype 18 (strain CDC 3083-94 / BS512)</name>
    <dbReference type="NCBI Taxonomy" id="344609"/>
    <lineage>
        <taxon>Bacteria</taxon>
        <taxon>Pseudomonadati</taxon>
        <taxon>Pseudomonadota</taxon>
        <taxon>Gammaproteobacteria</taxon>
        <taxon>Enterobacterales</taxon>
        <taxon>Enterobacteriaceae</taxon>
        <taxon>Shigella</taxon>
    </lineage>
</organism>
<name>GLMU_SHIB3</name>
<accession>B2TUP5</accession>
<feature type="chain" id="PRO_1000186491" description="Bifunctional protein GlmU">
    <location>
        <begin position="1"/>
        <end position="456"/>
    </location>
</feature>
<feature type="region of interest" description="Pyrophosphorylase" evidence="1">
    <location>
        <begin position="1"/>
        <end position="229"/>
    </location>
</feature>
<feature type="region of interest" description="Linker" evidence="1">
    <location>
        <begin position="230"/>
        <end position="250"/>
    </location>
</feature>
<feature type="region of interest" description="N-acetyltransferase" evidence="1">
    <location>
        <begin position="251"/>
        <end position="456"/>
    </location>
</feature>
<feature type="active site" description="Proton acceptor" evidence="1">
    <location>
        <position position="363"/>
    </location>
</feature>
<feature type="binding site" evidence="1">
    <location>
        <begin position="11"/>
        <end position="14"/>
    </location>
    <ligand>
        <name>UDP-N-acetyl-alpha-D-glucosamine</name>
        <dbReference type="ChEBI" id="CHEBI:57705"/>
    </ligand>
</feature>
<feature type="binding site" evidence="1">
    <location>
        <position position="25"/>
    </location>
    <ligand>
        <name>UDP-N-acetyl-alpha-D-glucosamine</name>
        <dbReference type="ChEBI" id="CHEBI:57705"/>
    </ligand>
</feature>
<feature type="binding site" evidence="1">
    <location>
        <position position="76"/>
    </location>
    <ligand>
        <name>UDP-N-acetyl-alpha-D-glucosamine</name>
        <dbReference type="ChEBI" id="CHEBI:57705"/>
    </ligand>
</feature>
<feature type="binding site" evidence="1">
    <location>
        <begin position="81"/>
        <end position="82"/>
    </location>
    <ligand>
        <name>UDP-N-acetyl-alpha-D-glucosamine</name>
        <dbReference type="ChEBI" id="CHEBI:57705"/>
    </ligand>
</feature>
<feature type="binding site" evidence="1">
    <location>
        <begin position="103"/>
        <end position="105"/>
    </location>
    <ligand>
        <name>UDP-N-acetyl-alpha-D-glucosamine</name>
        <dbReference type="ChEBI" id="CHEBI:57705"/>
    </ligand>
</feature>
<feature type="binding site" evidence="1">
    <location>
        <position position="105"/>
    </location>
    <ligand>
        <name>Mg(2+)</name>
        <dbReference type="ChEBI" id="CHEBI:18420"/>
    </ligand>
</feature>
<feature type="binding site" evidence="1">
    <location>
        <position position="140"/>
    </location>
    <ligand>
        <name>UDP-N-acetyl-alpha-D-glucosamine</name>
        <dbReference type="ChEBI" id="CHEBI:57705"/>
    </ligand>
</feature>
<feature type="binding site" evidence="1">
    <location>
        <position position="154"/>
    </location>
    <ligand>
        <name>UDP-N-acetyl-alpha-D-glucosamine</name>
        <dbReference type="ChEBI" id="CHEBI:57705"/>
    </ligand>
</feature>
<feature type="binding site" evidence="1">
    <location>
        <position position="169"/>
    </location>
    <ligand>
        <name>UDP-N-acetyl-alpha-D-glucosamine</name>
        <dbReference type="ChEBI" id="CHEBI:57705"/>
    </ligand>
</feature>
<feature type="binding site" evidence="1">
    <location>
        <position position="227"/>
    </location>
    <ligand>
        <name>Mg(2+)</name>
        <dbReference type="ChEBI" id="CHEBI:18420"/>
    </ligand>
</feature>
<feature type="binding site" evidence="1">
    <location>
        <position position="227"/>
    </location>
    <ligand>
        <name>UDP-N-acetyl-alpha-D-glucosamine</name>
        <dbReference type="ChEBI" id="CHEBI:57705"/>
    </ligand>
</feature>
<feature type="binding site" evidence="1">
    <location>
        <position position="333"/>
    </location>
    <ligand>
        <name>UDP-N-acetyl-alpha-D-glucosamine</name>
        <dbReference type="ChEBI" id="CHEBI:57705"/>
    </ligand>
</feature>
<feature type="binding site" evidence="1">
    <location>
        <position position="351"/>
    </location>
    <ligand>
        <name>UDP-N-acetyl-alpha-D-glucosamine</name>
        <dbReference type="ChEBI" id="CHEBI:57705"/>
    </ligand>
</feature>
<feature type="binding site" evidence="1">
    <location>
        <position position="366"/>
    </location>
    <ligand>
        <name>UDP-N-acetyl-alpha-D-glucosamine</name>
        <dbReference type="ChEBI" id="CHEBI:57705"/>
    </ligand>
</feature>
<feature type="binding site" evidence="1">
    <location>
        <position position="377"/>
    </location>
    <ligand>
        <name>UDP-N-acetyl-alpha-D-glucosamine</name>
        <dbReference type="ChEBI" id="CHEBI:57705"/>
    </ligand>
</feature>
<feature type="binding site" evidence="1">
    <location>
        <position position="380"/>
    </location>
    <ligand>
        <name>acetyl-CoA</name>
        <dbReference type="ChEBI" id="CHEBI:57288"/>
    </ligand>
</feature>
<feature type="binding site" evidence="1">
    <location>
        <begin position="386"/>
        <end position="387"/>
    </location>
    <ligand>
        <name>acetyl-CoA</name>
        <dbReference type="ChEBI" id="CHEBI:57288"/>
    </ligand>
</feature>
<feature type="binding site" evidence="1">
    <location>
        <position position="405"/>
    </location>
    <ligand>
        <name>acetyl-CoA</name>
        <dbReference type="ChEBI" id="CHEBI:57288"/>
    </ligand>
</feature>
<feature type="binding site" evidence="1">
    <location>
        <position position="423"/>
    </location>
    <ligand>
        <name>acetyl-CoA</name>
        <dbReference type="ChEBI" id="CHEBI:57288"/>
    </ligand>
</feature>
<feature type="binding site" evidence="1">
    <location>
        <position position="440"/>
    </location>
    <ligand>
        <name>acetyl-CoA</name>
        <dbReference type="ChEBI" id="CHEBI:57288"/>
    </ligand>
</feature>
<sequence length="456" mass="49266">MLNNAMSVVILAAGKGTRMYSDLPKVLHTLAGKAMVQHVIDAANELGAAHVHLVYGHGGDLLKQALKDDNLNWVLQAEQLGTGHAMQQAAPFFADDEDILMLYGDVPLISVETLQRLRDAKPQGGIGLLTVKLDDPTGYGRITRENGKVTGIVEHKDATDEQRQIQEINTGILIANGADMKRWLAKLTNNNAQGEYYITDIIALAYQEGREIVAVHPQRLSEVEGVNNRLQLSRLERVYQSEQAEKLLLAGVMLRDPARFYLRGTLTHGRDVEIDTNVIIEGNVTLGHRVKIGTGCVIKNSVIGDDCEISPYTVVEDVNLAAACTIGPFARLRPGAELLEGAHVGNFVEMKKARLGKGSKAGHLTYLGDAEIGDNVNIGAGTITCNYDGANKFKTIIGDDVFVGSDTQLVAPVTVGKGATIAAGTTVTRNVGENALAISRVPQTQKEGWRRPVKKK</sequence>
<gene>
    <name evidence="1" type="primary">glmU</name>
    <name type="ordered locus">SbBS512_E4191</name>
</gene>
<comment type="function">
    <text evidence="1">Catalyzes the last two sequential reactions in the de novo biosynthetic pathway for UDP-N-acetylglucosamine (UDP-GlcNAc). The C-terminal domain catalyzes the transfer of acetyl group from acetyl coenzyme A to glucosamine-1-phosphate (GlcN-1-P) to produce N-acetylglucosamine-1-phosphate (GlcNAc-1-P), which is converted into UDP-GlcNAc by the transfer of uridine 5-monophosphate (from uridine 5-triphosphate), a reaction catalyzed by the N-terminal domain.</text>
</comment>
<comment type="catalytic activity">
    <reaction evidence="1">
        <text>alpha-D-glucosamine 1-phosphate + acetyl-CoA = N-acetyl-alpha-D-glucosamine 1-phosphate + CoA + H(+)</text>
        <dbReference type="Rhea" id="RHEA:13725"/>
        <dbReference type="ChEBI" id="CHEBI:15378"/>
        <dbReference type="ChEBI" id="CHEBI:57287"/>
        <dbReference type="ChEBI" id="CHEBI:57288"/>
        <dbReference type="ChEBI" id="CHEBI:57776"/>
        <dbReference type="ChEBI" id="CHEBI:58516"/>
        <dbReference type="EC" id="2.3.1.157"/>
    </reaction>
</comment>
<comment type="catalytic activity">
    <reaction evidence="1">
        <text>N-acetyl-alpha-D-glucosamine 1-phosphate + UTP + H(+) = UDP-N-acetyl-alpha-D-glucosamine + diphosphate</text>
        <dbReference type="Rhea" id="RHEA:13509"/>
        <dbReference type="ChEBI" id="CHEBI:15378"/>
        <dbReference type="ChEBI" id="CHEBI:33019"/>
        <dbReference type="ChEBI" id="CHEBI:46398"/>
        <dbReference type="ChEBI" id="CHEBI:57705"/>
        <dbReference type="ChEBI" id="CHEBI:57776"/>
        <dbReference type="EC" id="2.7.7.23"/>
    </reaction>
</comment>
<comment type="cofactor">
    <cofactor evidence="1">
        <name>Mg(2+)</name>
        <dbReference type="ChEBI" id="CHEBI:18420"/>
    </cofactor>
    <text evidence="1">Binds 1 Mg(2+) ion per subunit.</text>
</comment>
<comment type="pathway">
    <text evidence="1">Nucleotide-sugar biosynthesis; UDP-N-acetyl-alpha-D-glucosamine biosynthesis; N-acetyl-alpha-D-glucosamine 1-phosphate from alpha-D-glucosamine 6-phosphate (route II): step 2/2.</text>
</comment>
<comment type="pathway">
    <text evidence="1">Nucleotide-sugar biosynthesis; UDP-N-acetyl-alpha-D-glucosamine biosynthesis; UDP-N-acetyl-alpha-D-glucosamine from N-acetyl-alpha-D-glucosamine 1-phosphate: step 1/1.</text>
</comment>
<comment type="pathway">
    <text evidence="1">Bacterial outer membrane biogenesis; LPS lipid A biosynthesis.</text>
</comment>
<comment type="subunit">
    <text evidence="1">Homotrimer.</text>
</comment>
<comment type="subcellular location">
    <subcellularLocation>
        <location evidence="1">Cytoplasm</location>
    </subcellularLocation>
</comment>
<comment type="similarity">
    <text evidence="1">In the N-terminal section; belongs to the N-acetylglucosamine-1-phosphate uridyltransferase family.</text>
</comment>
<comment type="similarity">
    <text evidence="1">In the C-terminal section; belongs to the transferase hexapeptide repeat family.</text>
</comment>
<dbReference type="EC" id="2.7.7.23" evidence="1"/>
<dbReference type="EC" id="2.3.1.157" evidence="1"/>
<dbReference type="EMBL" id="CP001063">
    <property type="protein sequence ID" value="ACD10013.1"/>
    <property type="molecule type" value="Genomic_DNA"/>
</dbReference>
<dbReference type="RefSeq" id="WP_000933747.1">
    <property type="nucleotide sequence ID" value="NC_010658.1"/>
</dbReference>
<dbReference type="SMR" id="B2TUP5"/>
<dbReference type="STRING" id="344609.SbBS512_E4191"/>
<dbReference type="KEGG" id="sbc:SbBS512_E4191"/>
<dbReference type="HOGENOM" id="CLU_029499_15_2_6"/>
<dbReference type="UniPathway" id="UPA00113">
    <property type="reaction ID" value="UER00532"/>
</dbReference>
<dbReference type="UniPathway" id="UPA00113">
    <property type="reaction ID" value="UER00533"/>
</dbReference>
<dbReference type="UniPathway" id="UPA00973"/>
<dbReference type="Proteomes" id="UP000001030">
    <property type="component" value="Chromosome"/>
</dbReference>
<dbReference type="GO" id="GO:0005737">
    <property type="term" value="C:cytoplasm"/>
    <property type="evidence" value="ECO:0007669"/>
    <property type="project" value="UniProtKB-SubCell"/>
</dbReference>
<dbReference type="GO" id="GO:0016020">
    <property type="term" value="C:membrane"/>
    <property type="evidence" value="ECO:0007669"/>
    <property type="project" value="GOC"/>
</dbReference>
<dbReference type="GO" id="GO:0019134">
    <property type="term" value="F:glucosamine-1-phosphate N-acetyltransferase activity"/>
    <property type="evidence" value="ECO:0007669"/>
    <property type="project" value="UniProtKB-UniRule"/>
</dbReference>
<dbReference type="GO" id="GO:0000287">
    <property type="term" value="F:magnesium ion binding"/>
    <property type="evidence" value="ECO:0007669"/>
    <property type="project" value="UniProtKB-UniRule"/>
</dbReference>
<dbReference type="GO" id="GO:0003977">
    <property type="term" value="F:UDP-N-acetylglucosamine diphosphorylase activity"/>
    <property type="evidence" value="ECO:0007669"/>
    <property type="project" value="UniProtKB-UniRule"/>
</dbReference>
<dbReference type="GO" id="GO:0000902">
    <property type="term" value="P:cell morphogenesis"/>
    <property type="evidence" value="ECO:0007669"/>
    <property type="project" value="UniProtKB-UniRule"/>
</dbReference>
<dbReference type="GO" id="GO:0071555">
    <property type="term" value="P:cell wall organization"/>
    <property type="evidence" value="ECO:0007669"/>
    <property type="project" value="UniProtKB-KW"/>
</dbReference>
<dbReference type="GO" id="GO:0009245">
    <property type="term" value="P:lipid A biosynthetic process"/>
    <property type="evidence" value="ECO:0007669"/>
    <property type="project" value="UniProtKB-UniRule"/>
</dbReference>
<dbReference type="GO" id="GO:0009252">
    <property type="term" value="P:peptidoglycan biosynthetic process"/>
    <property type="evidence" value="ECO:0007669"/>
    <property type="project" value="UniProtKB-UniRule"/>
</dbReference>
<dbReference type="GO" id="GO:0008360">
    <property type="term" value="P:regulation of cell shape"/>
    <property type="evidence" value="ECO:0007669"/>
    <property type="project" value="UniProtKB-KW"/>
</dbReference>
<dbReference type="GO" id="GO:0006048">
    <property type="term" value="P:UDP-N-acetylglucosamine biosynthetic process"/>
    <property type="evidence" value="ECO:0007669"/>
    <property type="project" value="UniProtKB-UniPathway"/>
</dbReference>
<dbReference type="CDD" id="cd02540">
    <property type="entry name" value="GT2_GlmU_N_bac"/>
    <property type="match status" value="1"/>
</dbReference>
<dbReference type="CDD" id="cd03353">
    <property type="entry name" value="LbH_GlmU_C"/>
    <property type="match status" value="1"/>
</dbReference>
<dbReference type="FunFam" id="2.160.10.10:FF:000011">
    <property type="entry name" value="Bifunctional protein GlmU"/>
    <property type="match status" value="1"/>
</dbReference>
<dbReference type="FunFam" id="3.90.550.10:FF:000006">
    <property type="entry name" value="Bifunctional protein GlmU"/>
    <property type="match status" value="1"/>
</dbReference>
<dbReference type="Gene3D" id="2.160.10.10">
    <property type="entry name" value="Hexapeptide repeat proteins"/>
    <property type="match status" value="1"/>
</dbReference>
<dbReference type="Gene3D" id="3.90.550.10">
    <property type="entry name" value="Spore Coat Polysaccharide Biosynthesis Protein SpsA, Chain A"/>
    <property type="match status" value="1"/>
</dbReference>
<dbReference type="HAMAP" id="MF_01631">
    <property type="entry name" value="GlmU"/>
    <property type="match status" value="1"/>
</dbReference>
<dbReference type="InterPro" id="IPR005882">
    <property type="entry name" value="Bifunctional_GlmU"/>
</dbReference>
<dbReference type="InterPro" id="IPR050065">
    <property type="entry name" value="GlmU-like"/>
</dbReference>
<dbReference type="InterPro" id="IPR038009">
    <property type="entry name" value="GlmU_C_LbH"/>
</dbReference>
<dbReference type="InterPro" id="IPR001451">
    <property type="entry name" value="Hexapep"/>
</dbReference>
<dbReference type="InterPro" id="IPR018357">
    <property type="entry name" value="Hexapep_transf_CS"/>
</dbReference>
<dbReference type="InterPro" id="IPR025877">
    <property type="entry name" value="MobA-like_NTP_Trfase"/>
</dbReference>
<dbReference type="InterPro" id="IPR029044">
    <property type="entry name" value="Nucleotide-diphossugar_trans"/>
</dbReference>
<dbReference type="InterPro" id="IPR011004">
    <property type="entry name" value="Trimer_LpxA-like_sf"/>
</dbReference>
<dbReference type="NCBIfam" id="TIGR01173">
    <property type="entry name" value="glmU"/>
    <property type="match status" value="1"/>
</dbReference>
<dbReference type="NCBIfam" id="NF006986">
    <property type="entry name" value="PRK09451.1"/>
    <property type="match status" value="1"/>
</dbReference>
<dbReference type="PANTHER" id="PTHR43584:SF3">
    <property type="entry name" value="BIFUNCTIONAL PROTEIN GLMU"/>
    <property type="match status" value="1"/>
</dbReference>
<dbReference type="PANTHER" id="PTHR43584">
    <property type="entry name" value="NUCLEOTIDYL TRANSFERASE"/>
    <property type="match status" value="1"/>
</dbReference>
<dbReference type="Pfam" id="PF00132">
    <property type="entry name" value="Hexapep"/>
    <property type="match status" value="1"/>
</dbReference>
<dbReference type="Pfam" id="PF12804">
    <property type="entry name" value="NTP_transf_3"/>
    <property type="match status" value="1"/>
</dbReference>
<dbReference type="SUPFAM" id="SSF53448">
    <property type="entry name" value="Nucleotide-diphospho-sugar transferases"/>
    <property type="match status" value="1"/>
</dbReference>
<dbReference type="SUPFAM" id="SSF51161">
    <property type="entry name" value="Trimeric LpxA-like enzymes"/>
    <property type="match status" value="1"/>
</dbReference>
<dbReference type="PROSITE" id="PS00101">
    <property type="entry name" value="HEXAPEP_TRANSFERASES"/>
    <property type="match status" value="1"/>
</dbReference>
<keyword id="KW-0012">Acyltransferase</keyword>
<keyword id="KW-0133">Cell shape</keyword>
<keyword id="KW-0961">Cell wall biogenesis/degradation</keyword>
<keyword id="KW-0963">Cytoplasm</keyword>
<keyword id="KW-0460">Magnesium</keyword>
<keyword id="KW-0479">Metal-binding</keyword>
<keyword id="KW-0511">Multifunctional enzyme</keyword>
<keyword id="KW-0548">Nucleotidyltransferase</keyword>
<keyword id="KW-0573">Peptidoglycan synthesis</keyword>
<keyword id="KW-1185">Reference proteome</keyword>
<keyword id="KW-0677">Repeat</keyword>
<keyword id="KW-0808">Transferase</keyword>
<proteinExistence type="inferred from homology"/>